<accession>A5GQK2</accession>
<reference key="1">
    <citation type="submission" date="2006-05" db="EMBL/GenBank/DDBJ databases">
        <authorList>
            <consortium name="Genoscope"/>
        </authorList>
    </citation>
    <scope>NUCLEOTIDE SEQUENCE [LARGE SCALE GENOMIC DNA]</scope>
    <source>
        <strain>RCC307</strain>
    </source>
</reference>
<dbReference type="EMBL" id="CT978603">
    <property type="protein sequence ID" value="CAK27161.1"/>
    <property type="molecule type" value="Genomic_DNA"/>
</dbReference>
<dbReference type="STRING" id="316278.SynRCC307_0258"/>
<dbReference type="KEGG" id="syr:SynRCC307_0258"/>
<dbReference type="eggNOG" id="ENOG5032YB3">
    <property type="taxonomic scope" value="Bacteria"/>
</dbReference>
<dbReference type="HOGENOM" id="CLU_180777_0_0_3"/>
<dbReference type="OrthoDB" id="516864at2"/>
<dbReference type="Proteomes" id="UP000001115">
    <property type="component" value="Chromosome"/>
</dbReference>
<dbReference type="HAMAP" id="MF_01360">
    <property type="entry name" value="UPF0367"/>
    <property type="match status" value="1"/>
</dbReference>
<dbReference type="InterPro" id="IPR020885">
    <property type="entry name" value="UPF0367"/>
</dbReference>
<dbReference type="NCBIfam" id="NF010236">
    <property type="entry name" value="PRK13683.1"/>
    <property type="match status" value="1"/>
</dbReference>
<feature type="chain" id="PRO_1000067778" description="UPF0367 protein SynRCC307_0258">
    <location>
        <begin position="1"/>
        <end position="87"/>
    </location>
</feature>
<comment type="similarity">
    <text evidence="1">Belongs to the UPF0367 family.</text>
</comment>
<proteinExistence type="inferred from homology"/>
<evidence type="ECO:0000255" key="1">
    <source>
        <dbReference type="HAMAP-Rule" id="MF_01360"/>
    </source>
</evidence>
<gene>
    <name type="ordered locus">SynRCC307_0258</name>
</gene>
<protein>
    <recommendedName>
        <fullName evidence="1">UPF0367 protein SynRCC307_0258</fullName>
    </recommendedName>
</protein>
<name>Y258_SYNR3</name>
<keyword id="KW-1185">Reference proteome</keyword>
<organism>
    <name type="scientific">Synechococcus sp. (strain RCC307)</name>
    <dbReference type="NCBI Taxonomy" id="316278"/>
    <lineage>
        <taxon>Bacteria</taxon>
        <taxon>Bacillati</taxon>
        <taxon>Cyanobacteriota</taxon>
        <taxon>Cyanophyceae</taxon>
        <taxon>Synechococcales</taxon>
        <taxon>Synechococcaceae</taxon>
        <taxon>Synechococcus</taxon>
    </lineage>
</organism>
<sequence length="87" mass="9547">MFVVELSLKLSPMPISVQRKSLEAAQGLYGEIRQAMESGHPQLMDLRCEKSEEKQICLRSSEIVSVQLYEKSAMGAGSKRPGFSTGG</sequence>